<sequence length="394" mass="44839">MALLDLAQEGMALFGFVLFVVLWLMHFMSIIYTRLHLNKKATDKQPYSKLPGVSLLKPLKGVDPNLINNLETFFELDYPKYEVLLCVQDHDDPAIDVCKKLLGKYPNVDARLFIGGKKVGINPKINNLMPAYEVAKYDLIWICDSGIRVIPDTLTDMVNQMTEKVGLVHGLPYVADRQGFAATLEQVYFGTSHPRSYISANVTGFKCVTGMSCLMRKDVLDQAGGLIAFAQYIAEDYFMAKAIADRGWRFSMSTQVAMQNSGSYSISQFQSRMIRWTKLRINMLPATIICEPISECFVASLIIGWAAHHVFRWDIMVFFMCHCLAWFIFDYIQLRGVQGGTLCFSKLDYAVAWFIRESMTIYIFLSALWDPTISWRTGRYRLRCGGTAEEILDV</sequence>
<keyword id="KW-0007">Acetylation</keyword>
<keyword id="KW-0328">Glycosyltransferase</keyword>
<keyword id="KW-0333">Golgi apparatus</keyword>
<keyword id="KW-0444">Lipid biosynthesis</keyword>
<keyword id="KW-0443">Lipid metabolism</keyword>
<keyword id="KW-0472">Membrane</keyword>
<keyword id="KW-1185">Reference proteome</keyword>
<keyword id="KW-0746">Sphingolipid metabolism</keyword>
<keyword id="KW-0808">Transferase</keyword>
<keyword id="KW-0812">Transmembrane</keyword>
<keyword id="KW-1133">Transmembrane helix</keyword>
<evidence type="ECO:0000250" key="1"/>
<evidence type="ECO:0000250" key="2">
    <source>
        <dbReference type="UniProtKB" id="Q16739"/>
    </source>
</evidence>
<evidence type="ECO:0000250" key="3">
    <source>
        <dbReference type="UniProtKB" id="Q9R0E0"/>
    </source>
</evidence>
<evidence type="ECO:0000255" key="4"/>
<evidence type="ECO:0000269" key="5">
    <source>
    </source>
</evidence>
<evidence type="ECO:0000269" key="6">
    <source>
    </source>
</evidence>
<evidence type="ECO:0000269" key="7">
    <source>
    </source>
</evidence>
<evidence type="ECO:0000269" key="8">
    <source>
    </source>
</evidence>
<evidence type="ECO:0000269" key="9">
    <source>
    </source>
</evidence>
<evidence type="ECO:0000269" key="10">
    <source>
    </source>
</evidence>
<evidence type="ECO:0000269" key="11">
    <source>
    </source>
</evidence>
<evidence type="ECO:0000269" key="12">
    <source>
    </source>
</evidence>
<evidence type="ECO:0000269" key="13">
    <source>
    </source>
</evidence>
<evidence type="ECO:0000269" key="14">
    <source>
    </source>
</evidence>
<evidence type="ECO:0000269" key="15">
    <source>
    </source>
</evidence>
<evidence type="ECO:0000303" key="16">
    <source>
    </source>
</evidence>
<evidence type="ECO:0000303" key="17">
    <source>
    </source>
</evidence>
<evidence type="ECO:0000305" key="18"/>
<evidence type="ECO:0000305" key="19">
    <source>
    </source>
</evidence>
<evidence type="ECO:0000312" key="20">
    <source>
        <dbReference type="EMBL" id="AAH50828.1"/>
    </source>
</evidence>
<evidence type="ECO:0000312" key="21">
    <source>
        <dbReference type="MGI" id="MGI:1332243"/>
    </source>
</evidence>
<evidence type="ECO:0007744" key="22">
    <source>
    </source>
</evidence>
<name>CEGT_MOUSE</name>
<feature type="chain" id="PRO_0000059177" description="Ceramide glucosyltransferase">
    <location>
        <begin position="1"/>
        <end position="394"/>
    </location>
</feature>
<feature type="topological domain" description="Lumenal" evidence="4">
    <location>
        <begin position="1"/>
        <end position="10"/>
    </location>
</feature>
<feature type="transmembrane region" description="Helical" evidence="4">
    <location>
        <begin position="11"/>
        <end position="32"/>
    </location>
</feature>
<feature type="topological domain" description="Cytoplasmic" evidence="4">
    <location>
        <begin position="33"/>
        <end position="195"/>
    </location>
</feature>
<feature type="transmembrane region" description="Helical" evidence="4">
    <location>
        <begin position="196"/>
        <end position="215"/>
    </location>
</feature>
<feature type="topological domain" description="Lumenal" evidence="4">
    <location>
        <begin position="216"/>
        <end position="287"/>
    </location>
</feature>
<feature type="transmembrane region" description="Helical" evidence="4">
    <location>
        <begin position="288"/>
        <end position="304"/>
    </location>
</feature>
<feature type="topological domain" description="Cytoplasmic" evidence="4">
    <location>
        <begin position="305"/>
        <end position="309"/>
    </location>
</feature>
<feature type="transmembrane region" description="Helical" evidence="4">
    <location>
        <begin position="310"/>
        <end position="328"/>
    </location>
</feature>
<feature type="topological domain" description="Lumenal" evidence="4">
    <location>
        <begin position="329"/>
        <end position="348"/>
    </location>
</feature>
<feature type="transmembrane region" description="Helical" evidence="4">
    <location>
        <begin position="349"/>
        <end position="369"/>
    </location>
</feature>
<feature type="topological domain" description="Cytoplasmic" evidence="4">
    <location>
        <begin position="370"/>
        <end position="394"/>
    </location>
</feature>
<feature type="short sequence motif" description="D1" evidence="18">
    <location>
        <position position="92"/>
    </location>
</feature>
<feature type="short sequence motif" description="D2" evidence="18">
    <location>
        <position position="144"/>
    </location>
</feature>
<feature type="short sequence motif" description="D3" evidence="18">
    <location>
        <position position="236"/>
    </location>
</feature>
<feature type="short sequence motif" description="(Q/R)XXRW" evidence="18">
    <location>
        <begin position="272"/>
        <end position="276"/>
    </location>
</feature>
<feature type="active site" description="Proton acceptor" evidence="3">
    <location>
        <position position="236"/>
    </location>
</feature>
<feature type="site" description="May play an important role in binding to the inhibitors DEPC and PDMP" evidence="1">
    <location>
        <position position="193"/>
    </location>
</feature>
<feature type="modified residue" description="N6-acetyllysine" evidence="22">
    <location>
        <position position="117"/>
    </location>
</feature>
<dbReference type="EC" id="2.4.1.80" evidence="5"/>
<dbReference type="EMBL" id="AB012807">
    <property type="protein sequence ID" value="BAA33558.1"/>
    <property type="molecule type" value="Genomic_DNA"/>
</dbReference>
<dbReference type="EMBL" id="D89866">
    <property type="protein sequence ID" value="BAA28782.1"/>
    <property type="molecule type" value="mRNA"/>
</dbReference>
<dbReference type="EMBL" id="AL808112">
    <property type="status" value="NOT_ANNOTATED_CDS"/>
    <property type="molecule type" value="Genomic_DNA"/>
</dbReference>
<dbReference type="EMBL" id="CH466565">
    <property type="protein sequence ID" value="EDL02214.1"/>
    <property type="molecule type" value="Genomic_DNA"/>
</dbReference>
<dbReference type="EMBL" id="BC050828">
    <property type="protein sequence ID" value="AAH50828.1"/>
    <property type="molecule type" value="mRNA"/>
</dbReference>
<dbReference type="CCDS" id="CCDS18219.1"/>
<dbReference type="RefSeq" id="NP_035803.1">
    <property type="nucleotide sequence ID" value="NM_011673.3"/>
</dbReference>
<dbReference type="SMR" id="O88693"/>
<dbReference type="BioGRID" id="204432">
    <property type="interactions" value="14"/>
</dbReference>
<dbReference type="FunCoup" id="O88693">
    <property type="interactions" value="1098"/>
</dbReference>
<dbReference type="STRING" id="10090.ENSMUSP00000030074"/>
<dbReference type="BindingDB" id="O88693"/>
<dbReference type="ChEMBL" id="CHEMBL6013"/>
<dbReference type="DrugCentral" id="O88693"/>
<dbReference type="CAZy" id="GT21">
    <property type="family name" value="Glycosyltransferase Family 21"/>
</dbReference>
<dbReference type="iPTMnet" id="O88693"/>
<dbReference type="PhosphoSitePlus" id="O88693"/>
<dbReference type="SwissPalm" id="O88693"/>
<dbReference type="PaxDb" id="10090-ENSMUSP00000030074"/>
<dbReference type="PeptideAtlas" id="O88693"/>
<dbReference type="ProteomicsDB" id="281529"/>
<dbReference type="Pumba" id="O88693"/>
<dbReference type="Antibodypedia" id="15178">
    <property type="antibodies" value="194 antibodies from 30 providers"/>
</dbReference>
<dbReference type="DNASU" id="22234"/>
<dbReference type="Ensembl" id="ENSMUST00000030074.8">
    <property type="protein sequence ID" value="ENSMUSP00000030074.8"/>
    <property type="gene ID" value="ENSMUSG00000028381.9"/>
</dbReference>
<dbReference type="GeneID" id="22234"/>
<dbReference type="KEGG" id="mmu:22234"/>
<dbReference type="UCSC" id="uc008szr.1">
    <property type="organism name" value="mouse"/>
</dbReference>
<dbReference type="AGR" id="MGI:1332243"/>
<dbReference type="CTD" id="7357"/>
<dbReference type="MGI" id="MGI:1332243">
    <property type="gene designation" value="Ugcg"/>
</dbReference>
<dbReference type="VEuPathDB" id="HostDB:ENSMUSG00000028381"/>
<dbReference type="eggNOG" id="KOG2547">
    <property type="taxonomic scope" value="Eukaryota"/>
</dbReference>
<dbReference type="GeneTree" id="ENSGT00390000012898"/>
<dbReference type="HOGENOM" id="CLU_030898_0_0_1"/>
<dbReference type="InParanoid" id="O88693"/>
<dbReference type="OMA" id="IVWIIDC"/>
<dbReference type="OrthoDB" id="1483400at2759"/>
<dbReference type="PhylomeDB" id="O88693"/>
<dbReference type="TreeFam" id="TF314564"/>
<dbReference type="BRENDA" id="2.4.1.80">
    <property type="organism ID" value="3474"/>
</dbReference>
<dbReference type="Reactome" id="R-MMU-9840309">
    <property type="pathway name" value="Glycosphingolipid biosynthesis"/>
</dbReference>
<dbReference type="UniPathway" id="UPA00222"/>
<dbReference type="BioGRID-ORCS" id="22234">
    <property type="hits" value="2 hits in 81 CRISPR screens"/>
</dbReference>
<dbReference type="ChiTaRS" id="Ugcg">
    <property type="organism name" value="mouse"/>
</dbReference>
<dbReference type="PRO" id="PR:O88693"/>
<dbReference type="Proteomes" id="UP000000589">
    <property type="component" value="Chromosome 4"/>
</dbReference>
<dbReference type="RNAct" id="O88693">
    <property type="molecule type" value="protein"/>
</dbReference>
<dbReference type="Bgee" id="ENSMUSG00000028381">
    <property type="expression patterns" value="Expressed in ectoplacental cone and 265 other cell types or tissues"/>
</dbReference>
<dbReference type="GO" id="GO:0000139">
    <property type="term" value="C:Golgi membrane"/>
    <property type="evidence" value="ECO:0000250"/>
    <property type="project" value="UniProtKB"/>
</dbReference>
<dbReference type="GO" id="GO:0008120">
    <property type="term" value="F:ceramide glucosyltransferase activity"/>
    <property type="evidence" value="ECO:0000315"/>
    <property type="project" value="UniProtKB"/>
</dbReference>
<dbReference type="GO" id="GO:0030154">
    <property type="term" value="P:cell differentiation"/>
    <property type="evidence" value="ECO:0000315"/>
    <property type="project" value="UniProtKB"/>
</dbReference>
<dbReference type="GO" id="GO:1903575">
    <property type="term" value="P:cornified envelope assembly"/>
    <property type="evidence" value="ECO:0000315"/>
    <property type="project" value="UniProtKB"/>
</dbReference>
<dbReference type="GO" id="GO:0061436">
    <property type="term" value="P:establishment of skin barrier"/>
    <property type="evidence" value="ECO:0000315"/>
    <property type="project" value="UniProtKB"/>
</dbReference>
<dbReference type="GO" id="GO:0006679">
    <property type="term" value="P:glucosylceramide biosynthetic process"/>
    <property type="evidence" value="ECO:0000315"/>
    <property type="project" value="UniProtKB"/>
</dbReference>
<dbReference type="GO" id="GO:0098856">
    <property type="term" value="P:intestinal lipid absorption"/>
    <property type="evidence" value="ECO:0000315"/>
    <property type="project" value="UniProtKB"/>
</dbReference>
<dbReference type="GO" id="GO:0030216">
    <property type="term" value="P:keratinocyte differentiation"/>
    <property type="evidence" value="ECO:0000315"/>
    <property type="project" value="UniProtKB"/>
</dbReference>
<dbReference type="GO" id="GO:0033210">
    <property type="term" value="P:leptin-mediated signaling pathway"/>
    <property type="evidence" value="ECO:0000315"/>
    <property type="project" value="UniProtKB"/>
</dbReference>
<dbReference type="GO" id="GO:0048666">
    <property type="term" value="P:neuron development"/>
    <property type="evidence" value="ECO:0000315"/>
    <property type="project" value="UniProtKB"/>
</dbReference>
<dbReference type="GO" id="GO:0006497">
    <property type="term" value="P:protein lipidation"/>
    <property type="evidence" value="ECO:0000315"/>
    <property type="project" value="UniProtKB"/>
</dbReference>
<dbReference type="GO" id="GO:0009966">
    <property type="term" value="P:regulation of signal transduction"/>
    <property type="evidence" value="ECO:0000315"/>
    <property type="project" value="UniProtKB"/>
</dbReference>
<dbReference type="CDD" id="cd02520">
    <property type="entry name" value="Glucosylceramide_synthase"/>
    <property type="match status" value="1"/>
</dbReference>
<dbReference type="FunFam" id="3.90.550.10:FF:000041">
    <property type="entry name" value="UDP-glucose ceramide glucosyltransferase"/>
    <property type="match status" value="1"/>
</dbReference>
<dbReference type="Gene3D" id="3.90.550.10">
    <property type="entry name" value="Spore Coat Polysaccharide Biosynthesis Protein SpsA, Chain A"/>
    <property type="match status" value="1"/>
</dbReference>
<dbReference type="InterPro" id="IPR025993">
    <property type="entry name" value="Ceramide_glucosylTrfase"/>
</dbReference>
<dbReference type="InterPro" id="IPR029044">
    <property type="entry name" value="Nucleotide-diphossugar_trans"/>
</dbReference>
<dbReference type="PANTHER" id="PTHR12726">
    <property type="entry name" value="CERAMIDE GLUCOSYLTRANSFERASE"/>
    <property type="match status" value="1"/>
</dbReference>
<dbReference type="PANTHER" id="PTHR12726:SF0">
    <property type="entry name" value="CERAMIDE GLUCOSYLTRANSFERASE"/>
    <property type="match status" value="1"/>
</dbReference>
<dbReference type="Pfam" id="PF13506">
    <property type="entry name" value="Glyco_transf_21"/>
    <property type="match status" value="1"/>
</dbReference>
<dbReference type="SUPFAM" id="SSF53448">
    <property type="entry name" value="Nucleotide-diphospho-sugar transferases"/>
    <property type="match status" value="1"/>
</dbReference>
<organism>
    <name type="scientific">Mus musculus</name>
    <name type="common">Mouse</name>
    <dbReference type="NCBI Taxonomy" id="10090"/>
    <lineage>
        <taxon>Eukaryota</taxon>
        <taxon>Metazoa</taxon>
        <taxon>Chordata</taxon>
        <taxon>Craniata</taxon>
        <taxon>Vertebrata</taxon>
        <taxon>Euteleostomi</taxon>
        <taxon>Mammalia</taxon>
        <taxon>Eutheria</taxon>
        <taxon>Euarchontoglires</taxon>
        <taxon>Glires</taxon>
        <taxon>Rodentia</taxon>
        <taxon>Myomorpha</taxon>
        <taxon>Muroidea</taxon>
        <taxon>Muridae</taxon>
        <taxon>Murinae</taxon>
        <taxon>Mus</taxon>
        <taxon>Mus</taxon>
    </lineage>
</organism>
<proteinExistence type="evidence at protein level"/>
<gene>
    <name evidence="21" type="primary">Ugcg</name>
</gene>
<accession>O88693</accession>
<accession>A2AN90</accession>
<reference key="1">
    <citation type="journal article" date="1998" name="Biochem. Biophys. Res. Commun.">
        <title>Molecular cloning and characterization of the mouse ceramide glucosyltransferase gene.</title>
        <authorList>
            <person name="Ichikawa S."/>
            <person name="Ozawa K."/>
            <person name="Hirabayashi Y."/>
        </authorList>
    </citation>
    <scope>NUCLEOTIDE SEQUENCE [GENOMIC DNA]</scope>
    <source>
        <strain>129/SvJ</strain>
    </source>
</reference>
<reference key="2">
    <citation type="journal article" date="1998" name="Biochem. Mol. Biol. Int.">
        <title>Molecular cloning and expression of mouse ceramide glucosyltransferase.</title>
        <authorList>
            <person name="Ichikawa S."/>
            <person name="Ozawa K."/>
            <person name="Hirabayashi Y."/>
        </authorList>
    </citation>
    <scope>NUCLEOTIDE SEQUENCE [MRNA]</scope>
    <source>
        <strain>C57BL/6J</strain>
        <tissue>Brain</tissue>
    </source>
</reference>
<reference key="3">
    <citation type="journal article" date="2009" name="PLoS Biol.">
        <title>Lineage-specific biology revealed by a finished genome assembly of the mouse.</title>
        <authorList>
            <person name="Church D.M."/>
            <person name="Goodstadt L."/>
            <person name="Hillier L.W."/>
            <person name="Zody M.C."/>
            <person name="Goldstein S."/>
            <person name="She X."/>
            <person name="Bult C.J."/>
            <person name="Agarwala R."/>
            <person name="Cherry J.L."/>
            <person name="DiCuccio M."/>
            <person name="Hlavina W."/>
            <person name="Kapustin Y."/>
            <person name="Meric P."/>
            <person name="Maglott D."/>
            <person name="Birtle Z."/>
            <person name="Marques A.C."/>
            <person name="Graves T."/>
            <person name="Zhou S."/>
            <person name="Teague B."/>
            <person name="Potamousis K."/>
            <person name="Churas C."/>
            <person name="Place M."/>
            <person name="Herschleb J."/>
            <person name="Runnheim R."/>
            <person name="Forrest D."/>
            <person name="Amos-Landgraf J."/>
            <person name="Schwartz D.C."/>
            <person name="Cheng Z."/>
            <person name="Lindblad-Toh K."/>
            <person name="Eichler E.E."/>
            <person name="Ponting C.P."/>
        </authorList>
    </citation>
    <scope>NUCLEOTIDE SEQUENCE [LARGE SCALE GENOMIC DNA]</scope>
    <source>
        <strain>C57BL/6J</strain>
    </source>
</reference>
<reference key="4">
    <citation type="submission" date="2005-09" db="EMBL/GenBank/DDBJ databases">
        <authorList>
            <person name="Mural R.J."/>
            <person name="Adams M.D."/>
            <person name="Myers E.W."/>
            <person name="Smith H.O."/>
            <person name="Venter J.C."/>
        </authorList>
    </citation>
    <scope>NUCLEOTIDE SEQUENCE [LARGE SCALE GENOMIC DNA]</scope>
</reference>
<reference evidence="18" key="5">
    <citation type="journal article" date="2004" name="Genome Res.">
        <title>The status, quality, and expansion of the NIH full-length cDNA project: the Mammalian Gene Collection (MGC).</title>
        <authorList>
            <consortium name="The MGC Project Team"/>
        </authorList>
    </citation>
    <scope>NUCLEOTIDE SEQUENCE [LARGE SCALE MRNA]</scope>
    <source>
        <tissue evidence="20">Limb</tissue>
    </source>
</reference>
<reference key="6">
    <citation type="journal article" date="1999" name="Proc. Natl. Acad. Sci. U.S.A.">
        <title>A vital role for glycosphingolipid synthesis during development and differentiation.</title>
        <authorList>
            <person name="Yamashita T."/>
            <person name="Wada R."/>
            <person name="Sasaki T."/>
            <person name="Deng C."/>
            <person name="Bierfreund U."/>
            <person name="Sandhoff K."/>
            <person name="Proia R.L."/>
        </authorList>
    </citation>
    <scope>FUNCTION</scope>
    <scope>CATALYTIC ACTIVITY</scope>
    <scope>PATHWAY</scope>
    <scope>SUBCELLULAR LOCATION</scope>
    <scope>DISRUPTION PHENOTYPE</scope>
</reference>
<reference key="7">
    <citation type="journal article" date="2002" name="Biochim. Biophys. Acta">
        <title>Early developmental expression of the gene encoding glucosylceramide synthase, the enzyme controlling the first committed step of glycosphingolipid synthesis.</title>
        <authorList>
            <person name="Yamashita T."/>
            <person name="Wada R."/>
            <person name="Proia R.L."/>
        </authorList>
    </citation>
    <scope>DEVELOPMENTAL STAGE</scope>
</reference>
<reference key="8">
    <citation type="journal article" date="2005" name="Proc. Natl. Acad. Sci. U.S.A.">
        <title>Cell-specific deletion of glucosylceramide synthase in brain leads to severe neural defects after birth.</title>
        <authorList>
            <person name="Jennemann R."/>
            <person name="Sandhoff R."/>
            <person name="Wang S."/>
            <person name="Kiss E."/>
            <person name="Gretz N."/>
            <person name="Zuliani C."/>
            <person name="Martin-Villalba A."/>
            <person name="Jaeger R."/>
            <person name="Schorle H."/>
            <person name="Kenzelmann M."/>
            <person name="Bonrouhi M."/>
            <person name="Wiegandt H."/>
            <person name="Groene H.J."/>
        </authorList>
    </citation>
    <scope>FUNCTION</scope>
    <scope>PATHWAY</scope>
    <scope>DISRUPTION PHENOTYPE</scope>
</reference>
<reference key="9">
    <citation type="journal article" date="2007" name="J. Biol. Chem.">
        <title>Integrity and barrier function of the epidermis critically depend on glucosylceramide synthesis.</title>
        <authorList>
            <person name="Jennemann R."/>
            <person name="Sandhoff R."/>
            <person name="Langbein L."/>
            <person name="Kaden S."/>
            <person name="Rothermel U."/>
            <person name="Gallala H."/>
            <person name="Sandhoff K."/>
            <person name="Wiegandt H."/>
            <person name="Groene H.J."/>
        </authorList>
    </citation>
    <scope>FUNCTION</scope>
    <scope>DISRUPTION PHENOTYPE</scope>
</reference>
<reference key="10">
    <citation type="journal article" date="2010" name="Glia">
        <title>Glycosphingolipid synthesis in cerebellar Purkinje neurons: roles in myelin formation and axonal homeostasis.</title>
        <authorList>
            <person name="Watanabe S."/>
            <person name="Endo S."/>
            <person name="Oshima E."/>
            <person name="Hoshi T."/>
            <person name="Higashi H."/>
            <person name="Yamada K."/>
            <person name="Tohyama K."/>
            <person name="Yamashita T."/>
            <person name="Hirabayashi Y."/>
        </authorList>
    </citation>
    <scope>DISRUPTION PHENOTYPE</scope>
</reference>
<reference key="11">
    <citation type="journal article" date="2010" name="Hepatology">
        <title>Hepatic glycosphingolipid deficiency and liver function in mice.</title>
        <authorList>
            <person name="Jennemann R."/>
            <person name="Rothermel U."/>
            <person name="Wang S."/>
            <person name="Sandhoff R."/>
            <person name="Kaden S."/>
            <person name="Out R."/>
            <person name="van Berkel T.J."/>
            <person name="Aerts J.M."/>
            <person name="Ghauharali K."/>
            <person name="Sticht C."/>
            <person name="Groene H.J."/>
        </authorList>
    </citation>
    <scope>DISRUPTION PHENOTYPE</scope>
</reference>
<reference key="12">
    <citation type="journal article" date="2012" name="J. Biol. Chem.">
        <title>Glycosphingolipids are essential for intestinal endocytic function.</title>
        <authorList>
            <person name="Jennemann R."/>
            <person name="Kaden S."/>
            <person name="Sandhoff R."/>
            <person name="Nordstroem V."/>
            <person name="Wang S."/>
            <person name="Volz M."/>
            <person name="Robine S."/>
            <person name="Amen N."/>
            <person name="Rothermel U."/>
            <person name="Wiegandt H."/>
            <person name="Groene H.J."/>
        </authorList>
    </citation>
    <scope>FUNCTION</scope>
    <scope>DISRUPTION PHENOTYPE</scope>
</reference>
<reference key="13">
    <citation type="journal article" date="2013" name="Hum. Mol. Genet.">
        <title>Differentiation of epidermal keratinocytes is dependent on glucosylceramide:ceramide processing.</title>
        <authorList>
            <person name="Amen N."/>
            <person name="Mathow D."/>
            <person name="Rabionet M."/>
            <person name="Sandhoff R."/>
            <person name="Langbein L."/>
            <person name="Gretz N."/>
            <person name="Jaeckel C."/>
            <person name="Groene H.J."/>
            <person name="Jennemann R."/>
        </authorList>
    </citation>
    <scope>FUNCTION</scope>
</reference>
<reference key="14">
    <citation type="journal article" date="2013" name="PLoS Biol.">
        <title>Neuronal expression of glucosylceramide synthase in central nervous system regulates body weight and energy homeostasis.</title>
        <authorList>
            <person name="Nordstroem V."/>
            <person name="Willershaeuser M."/>
            <person name="Herzer S."/>
            <person name="Rozman J."/>
            <person name="von Bohlen Und Halbach O."/>
            <person name="Meldner S."/>
            <person name="Rothermel U."/>
            <person name="Kaden S."/>
            <person name="Roth F.C."/>
            <person name="Waldeck C."/>
            <person name="Gretz N."/>
            <person name="de Angelis M.H."/>
            <person name="Draguhn A."/>
            <person name="Klingenspor M."/>
            <person name="Groene H.J."/>
            <person name="Jennemann R."/>
        </authorList>
    </citation>
    <scope>FUNCTION</scope>
    <scope>DISRUPTION PHENOTYPE</scope>
</reference>
<reference key="15">
    <citation type="journal article" date="2013" name="Proc. Natl. Acad. Sci. U.S.A.">
        <title>Label-free quantitative proteomics of the lysine acetylome in mitochondria identifies substrates of SIRT3 in metabolic pathways.</title>
        <authorList>
            <person name="Rardin M.J."/>
            <person name="Newman J.C."/>
            <person name="Held J.M."/>
            <person name="Cusack M.P."/>
            <person name="Sorensen D.J."/>
            <person name="Li B."/>
            <person name="Schilling B."/>
            <person name="Mooney S.D."/>
            <person name="Kahn C.R."/>
            <person name="Verdin E."/>
            <person name="Gibson B.W."/>
        </authorList>
    </citation>
    <scope>ACETYLATION [LARGE SCALE ANALYSIS] AT LYS-117</scope>
    <scope>IDENTIFICATION BY MASS SPECTROMETRY [LARGE SCALE ANALYSIS]</scope>
    <source>
        <tissue>Liver</tissue>
    </source>
</reference>
<reference key="16">
    <citation type="journal article" date="2017" name="J. Lipid Res.">
        <title>Diastereomer-specific quantification of bioactive hexosylceramides from bacteria and mammals.</title>
        <authorList>
            <person name="von Gerichten J."/>
            <person name="Schlosser K."/>
            <person name="Lamprecht D."/>
            <person name="Morace I."/>
            <person name="Eckhardt M."/>
            <person name="Wachten D."/>
            <person name="Jennemann R."/>
            <person name="Groene H.J."/>
            <person name="Mack M."/>
            <person name="Sandhoff R."/>
        </authorList>
    </citation>
    <scope>FUNCTION</scope>
    <scope>PATHWAY</scope>
</reference>
<reference key="17">
    <citation type="journal article" date="2021" name="J. Lipid Res.">
        <title>Human glucocerebrosidase mediates formation of xylosyl-cholesterol by beta-xylosidase and transxylosidase reactions.</title>
        <authorList>
            <person name="Boer D.E."/>
            <person name="Mirzaian M."/>
            <person name="Ferraz M.J."/>
            <person name="Zwiers K.C."/>
            <person name="Baks M.V."/>
            <person name="Hazeu M.D."/>
            <person name="Ottenhoff R."/>
            <person name="Marques A.R.A."/>
            <person name="Meijer R."/>
            <person name="Roos J.C.P."/>
            <person name="Cox T.M."/>
            <person name="Boot R.G."/>
            <person name="Pannu N."/>
            <person name="Overkleeft H.S."/>
            <person name="Artola M."/>
            <person name="Aerts J.M."/>
        </authorList>
    </citation>
    <scope>FUNCTION</scope>
    <scope>CATALYTIC ACTIVITY</scope>
    <scope>PATHWAY</scope>
</reference>
<comment type="function">
    <text evidence="5 7 8 11 12 13 14 15 16">Participates in the initial step of the glucosylceramide-based glycosphingolipid/GSL synthetic pathway at the cytosolic surface of the Golgi. Catalyzes the transfer of glucose from UDP-glucose to ceramide to produce glucosylceramide/GlcCer (such as beta-D-glucosyl-(1&lt;-&gt;1')-N-acylsphing-4-enine) (PubMed:10430909, PubMed:16109770, PubMed:28373486). Glucosylceramide is the core component of glycosphingolipids/GSLs, amphipathic molecules consisting of a ceramide lipid moiety embedded in the outer leaflet of the membrane, linked to one of hundreds of different externally oriented oligosaccharide structures (PubMed:10430909). Glycosphingolipids are essential components of membrane microdomains that mediate membrane trafficking and signal transduction (PubMed:10430909). They are implicated in many fundamental cellular processes, including growth, differentiation, migration, morphogenesis, cell-to-cell and cell-to-matrix interactions (PubMed:10430909). They are required for instance in the proper development and functioning of the nervous system (PubMed:16109770). As an example of their role in signal transduction, they regulate the leptin receptor/LEPR in the leptin-mediated signaling pathway (PubMed:23554574). They also play an important role in the establishment of the skin barrier regulating keratinocyte differentiation and the proper assembly of the cornified envelope (PubMed:17145749, PubMed:23748427). The biosynthesis of GSLs is also required for the proper intestinal endocytic uptake of nutritional lipids (PubMed:22851168). Catalyzes the synthesis of xylosylceramide/XylCer (such as beta-D-xylosyl-(1&lt;-&gt;1')-N-acylsphing-4-enine) using UDP-Xyl as xylose donor (PubMed:33361282).</text>
</comment>
<comment type="catalytic activity">
    <reaction evidence="5">
        <text>an N-acylsphing-4-enine + UDP-alpha-D-glucose = a beta-D-glucosyl-(1&lt;-&gt;1')-N-acylsphing-4-enine + UDP + H(+)</text>
        <dbReference type="Rhea" id="RHEA:12088"/>
        <dbReference type="ChEBI" id="CHEBI:15378"/>
        <dbReference type="ChEBI" id="CHEBI:22801"/>
        <dbReference type="ChEBI" id="CHEBI:52639"/>
        <dbReference type="ChEBI" id="CHEBI:58223"/>
        <dbReference type="ChEBI" id="CHEBI:58885"/>
        <dbReference type="EC" id="2.4.1.80"/>
    </reaction>
    <physiologicalReaction direction="left-to-right" evidence="5">
        <dbReference type="Rhea" id="RHEA:12089"/>
    </physiologicalReaction>
</comment>
<comment type="catalytic activity">
    <reaction evidence="15">
        <text>UDP-alpha-D-xylose + an N-acylsphing-4-enine = a beta-D-xylosyl-(1&lt;-&gt;1')-N-acylsphing-4-enine + UDP + H(+)</text>
        <dbReference type="Rhea" id="RHEA:70243"/>
        <dbReference type="ChEBI" id="CHEBI:15378"/>
        <dbReference type="ChEBI" id="CHEBI:52639"/>
        <dbReference type="ChEBI" id="CHEBI:57632"/>
        <dbReference type="ChEBI" id="CHEBI:58223"/>
        <dbReference type="ChEBI" id="CHEBI:189068"/>
    </reaction>
    <physiologicalReaction direction="left-to-right" evidence="15">
        <dbReference type="Rhea" id="RHEA:70244"/>
    </physiologicalReaction>
</comment>
<comment type="catalytic activity">
    <reaction evidence="15">
        <text>N-(9Z-octadecenoyl)-sphing-4-enine + UDP-alpha-D-xylose = beta-D-xylosyl-(1&lt;-&gt;1')-N-(9Z-octadecenoyl)-sphing-4-enine + UDP + H(+)</text>
        <dbReference type="Rhea" id="RHEA:70247"/>
        <dbReference type="ChEBI" id="CHEBI:15378"/>
        <dbReference type="ChEBI" id="CHEBI:57632"/>
        <dbReference type="ChEBI" id="CHEBI:58223"/>
        <dbReference type="ChEBI" id="CHEBI:77996"/>
        <dbReference type="ChEBI" id="CHEBI:189081"/>
    </reaction>
    <physiologicalReaction direction="left-to-right" evidence="15">
        <dbReference type="Rhea" id="RHEA:70248"/>
    </physiologicalReaction>
</comment>
<comment type="pathway">
    <text evidence="5 7 14 15">Lipid metabolism; sphingolipid metabolism.</text>
</comment>
<comment type="subunit">
    <text evidence="2">Interacts with RTN1; regulates the ceramide glucosyltransferase activity of UGCG.</text>
</comment>
<comment type="subcellular location">
    <subcellularLocation>
        <location evidence="19">Golgi apparatus membrane</location>
        <topology evidence="3">Multi-pass membrane protein</topology>
    </subcellularLocation>
</comment>
<comment type="developmental stage">
    <text evidence="6">Expressed early in preimplantation development, being already detected in eight-cell-stage embryos.</text>
</comment>
<comment type="domain">
    <text evidence="3">The D1, D2, D3, (Q/R)XXRW motif is a critical part of the GCS active site, involved in catalysis and UDP-sugar binding.</text>
</comment>
<comment type="disruption phenotype">
    <text evidence="5 7 8 9 10 11 12">Embryonic lethal (PubMed:10430909). Homozygous knockout embryos initiate gastrulation with clear differentiation into embryonic germ layers, mesoderm, endoderm and ectoderm as well as the regional expression of critical genes (PubMed:10430909). However, a major apoptotic process leads to their resorption that starts at 7.5 dpc and is completed at 9.5 dpc (PubMed:10430909). Neural cell-specific conditional knockout does not affect early brain development but mice die between postnatal days 11 and 24 (PubMed:16109770). Dysfunction of cerebellum and peripheral nerves associated with some structural defects are observed (PubMed:16109770, PubMed:20544855). Peripheral nerves display increased surface area for both axon and myelin (PubMed:16109770). Purkinje cells undergo axonal degeneration associated with a disruption of myelin sheaths (PubMed:20544855). Forebrain neuron-specific conditional knockout leads to development of progressive obesity, hyperleptinemia, and glucose intolerance (PubMed:23554574). Epidermal-specific conditional knockout leads to a significant decrease of the total glucosylceramide content in the epidermis, a failure of the skin water barrier and a detachment of the stratum corneum (PubMed:17145749). Enterocyte-specific conditional knockout mice display deficient absorption of nutritional lipids (PubMed:22851168). Severe defects in intestinal epithelial differentiation also appear between postnatal days 5 and 7 but not before (PubMed:22851168). Hepatocyte-specific conditional knockout does not change basic liver functions with respect to sterol, glucose, and lipoprotein homeostasis (PubMed:20432257).</text>
</comment>
<comment type="similarity">
    <text evidence="18">Belongs to the glycosyltransferase 2 family.</text>
</comment>
<protein>
    <recommendedName>
        <fullName evidence="18">Ceramide glucosyltransferase</fullName>
        <ecNumber evidence="5">2.4.1.80</ecNumber>
    </recommendedName>
    <alternativeName>
        <fullName>GLCT-1</fullName>
    </alternativeName>
    <alternativeName>
        <fullName>Glucosylceramide synthase</fullName>
        <shortName evidence="17">GCS</shortName>
    </alternativeName>
    <alternativeName>
        <fullName>Glycosylceramide synthase</fullName>
    </alternativeName>
    <alternativeName>
        <fullName>UDP-glucose ceramide glucosyltransferase</fullName>
    </alternativeName>
    <alternativeName>
        <fullName>UDP-glucose:N-acylsphingosine D-glucosyltransferase</fullName>
    </alternativeName>
</protein>